<proteinExistence type="inferred from homology"/>
<protein>
    <recommendedName>
        <fullName evidence="1">Small ribosomal subunit protein uS4</fullName>
    </recommendedName>
    <alternativeName>
        <fullName evidence="3">30S ribosomal protein S4</fullName>
    </alternativeName>
</protein>
<accession>A0M574</accession>
<feature type="chain" id="PRO_0000293287" description="Small ribosomal subunit protein uS4">
    <location>
        <begin position="1"/>
        <end position="201"/>
    </location>
</feature>
<feature type="domain" description="S4 RNA-binding" evidence="1">
    <location>
        <begin position="93"/>
        <end position="153"/>
    </location>
</feature>
<feature type="region of interest" description="Disordered" evidence="2">
    <location>
        <begin position="26"/>
        <end position="45"/>
    </location>
</feature>
<name>RS4_CHRFK</name>
<comment type="function">
    <text evidence="1">One of the primary rRNA binding proteins, it binds directly to 16S rRNA where it nucleates assembly of the body of the 30S subunit.</text>
</comment>
<comment type="function">
    <text evidence="1">With S5 and S12 plays an important role in translational accuracy.</text>
</comment>
<comment type="subunit">
    <text evidence="1">Part of the 30S ribosomal subunit. Contacts protein S5. The interaction surface between S4 and S5 is involved in control of translational fidelity.</text>
</comment>
<comment type="similarity">
    <text evidence="1">Belongs to the universal ribosomal protein uS4 family.</text>
</comment>
<gene>
    <name evidence="1" type="primary">rpsD</name>
    <name type="ordered locus">GFO_2815</name>
</gene>
<organism>
    <name type="scientific">Christiangramia forsetii (strain DSM 17595 / CGMCC 1.15422 / KT0803)</name>
    <name type="common">Gramella forsetii</name>
    <dbReference type="NCBI Taxonomy" id="411154"/>
    <lineage>
        <taxon>Bacteria</taxon>
        <taxon>Pseudomonadati</taxon>
        <taxon>Bacteroidota</taxon>
        <taxon>Flavobacteriia</taxon>
        <taxon>Flavobacteriales</taxon>
        <taxon>Flavobacteriaceae</taxon>
        <taxon>Christiangramia</taxon>
    </lineage>
</organism>
<reference key="1">
    <citation type="journal article" date="2006" name="Environ. Microbiol.">
        <title>Whole genome analysis of the marine Bacteroidetes'Gramella forsetii' reveals adaptations to degradation of polymeric organic matter.</title>
        <authorList>
            <person name="Bauer M."/>
            <person name="Kube M."/>
            <person name="Teeling H."/>
            <person name="Richter M."/>
            <person name="Lombardot T."/>
            <person name="Allers E."/>
            <person name="Wuerdemann C.A."/>
            <person name="Quast C."/>
            <person name="Kuhl H."/>
            <person name="Knaust F."/>
            <person name="Woebken D."/>
            <person name="Bischof K."/>
            <person name="Mussmann M."/>
            <person name="Choudhuri J.V."/>
            <person name="Meyer F."/>
            <person name="Reinhardt R."/>
            <person name="Amann R.I."/>
            <person name="Gloeckner F.O."/>
        </authorList>
    </citation>
    <scope>NUCLEOTIDE SEQUENCE [LARGE SCALE GENOMIC DNA]</scope>
    <source>
        <strain>DSM 17595 / CGMCC 1.15422 / KT0803</strain>
    </source>
</reference>
<sequence>MARYTGPKTKIARKFGEAIFGDDKSFEKRNYPPGQHGNNRRRGKKSEYAIQLMEKQKAKYTYGILERQFRNMFEKATRAQGITGEVLLQLCESRLDNVVYRMGVAPSRRAARQLVGHRHITVNGELVNIPSYHLKAGDVVGVREKSKSLAVVQESLSNNSSVYEWISWNSEKKEGTFVAVPGRVQIPENINEQFIVELYSK</sequence>
<keyword id="KW-0687">Ribonucleoprotein</keyword>
<keyword id="KW-0689">Ribosomal protein</keyword>
<keyword id="KW-0694">RNA-binding</keyword>
<keyword id="KW-0699">rRNA-binding</keyword>
<dbReference type="EMBL" id="CU207366">
    <property type="protein sequence ID" value="CAL67769.1"/>
    <property type="molecule type" value="Genomic_DNA"/>
</dbReference>
<dbReference type="RefSeq" id="WP_011710672.1">
    <property type="nucleotide sequence ID" value="NC_008571.1"/>
</dbReference>
<dbReference type="SMR" id="A0M574"/>
<dbReference type="STRING" id="411154.GFO_2815"/>
<dbReference type="KEGG" id="gfo:GFO_2815"/>
<dbReference type="eggNOG" id="COG0522">
    <property type="taxonomic scope" value="Bacteria"/>
</dbReference>
<dbReference type="HOGENOM" id="CLU_092403_0_2_10"/>
<dbReference type="OrthoDB" id="9803672at2"/>
<dbReference type="Proteomes" id="UP000000755">
    <property type="component" value="Chromosome"/>
</dbReference>
<dbReference type="GO" id="GO:0015935">
    <property type="term" value="C:small ribosomal subunit"/>
    <property type="evidence" value="ECO:0007669"/>
    <property type="project" value="InterPro"/>
</dbReference>
<dbReference type="GO" id="GO:0019843">
    <property type="term" value="F:rRNA binding"/>
    <property type="evidence" value="ECO:0007669"/>
    <property type="project" value="UniProtKB-UniRule"/>
</dbReference>
<dbReference type="GO" id="GO:0003735">
    <property type="term" value="F:structural constituent of ribosome"/>
    <property type="evidence" value="ECO:0007669"/>
    <property type="project" value="InterPro"/>
</dbReference>
<dbReference type="GO" id="GO:0042274">
    <property type="term" value="P:ribosomal small subunit biogenesis"/>
    <property type="evidence" value="ECO:0007669"/>
    <property type="project" value="TreeGrafter"/>
</dbReference>
<dbReference type="GO" id="GO:0006412">
    <property type="term" value="P:translation"/>
    <property type="evidence" value="ECO:0007669"/>
    <property type="project" value="UniProtKB-UniRule"/>
</dbReference>
<dbReference type="CDD" id="cd00165">
    <property type="entry name" value="S4"/>
    <property type="match status" value="1"/>
</dbReference>
<dbReference type="FunFam" id="3.10.290.10:FF:000001">
    <property type="entry name" value="30S ribosomal protein S4"/>
    <property type="match status" value="1"/>
</dbReference>
<dbReference type="Gene3D" id="1.10.1050.10">
    <property type="entry name" value="Ribosomal Protein S4 Delta 41, Chain A, domain 1"/>
    <property type="match status" value="1"/>
</dbReference>
<dbReference type="Gene3D" id="3.10.290.10">
    <property type="entry name" value="RNA-binding S4 domain"/>
    <property type="match status" value="1"/>
</dbReference>
<dbReference type="HAMAP" id="MF_01306_B">
    <property type="entry name" value="Ribosomal_uS4_B"/>
    <property type="match status" value="1"/>
</dbReference>
<dbReference type="InterPro" id="IPR022801">
    <property type="entry name" value="Ribosomal_uS4"/>
</dbReference>
<dbReference type="InterPro" id="IPR005709">
    <property type="entry name" value="Ribosomal_uS4_bac-type"/>
</dbReference>
<dbReference type="InterPro" id="IPR001912">
    <property type="entry name" value="Ribosomal_uS4_N"/>
</dbReference>
<dbReference type="InterPro" id="IPR002942">
    <property type="entry name" value="S4_RNA-bd"/>
</dbReference>
<dbReference type="InterPro" id="IPR036986">
    <property type="entry name" value="S4_RNA-bd_sf"/>
</dbReference>
<dbReference type="NCBIfam" id="NF003717">
    <property type="entry name" value="PRK05327.1"/>
    <property type="match status" value="1"/>
</dbReference>
<dbReference type="NCBIfam" id="TIGR01017">
    <property type="entry name" value="rpsD_bact"/>
    <property type="match status" value="1"/>
</dbReference>
<dbReference type="PANTHER" id="PTHR11831">
    <property type="entry name" value="30S 40S RIBOSOMAL PROTEIN"/>
    <property type="match status" value="1"/>
</dbReference>
<dbReference type="PANTHER" id="PTHR11831:SF4">
    <property type="entry name" value="SMALL RIBOSOMAL SUBUNIT PROTEIN US4M"/>
    <property type="match status" value="1"/>
</dbReference>
<dbReference type="Pfam" id="PF00163">
    <property type="entry name" value="Ribosomal_S4"/>
    <property type="match status" value="1"/>
</dbReference>
<dbReference type="Pfam" id="PF01479">
    <property type="entry name" value="S4"/>
    <property type="match status" value="1"/>
</dbReference>
<dbReference type="SMART" id="SM01390">
    <property type="entry name" value="Ribosomal_S4"/>
    <property type="match status" value="1"/>
</dbReference>
<dbReference type="SMART" id="SM00363">
    <property type="entry name" value="S4"/>
    <property type="match status" value="1"/>
</dbReference>
<dbReference type="SUPFAM" id="SSF55174">
    <property type="entry name" value="Alpha-L RNA-binding motif"/>
    <property type="match status" value="1"/>
</dbReference>
<dbReference type="PROSITE" id="PS50889">
    <property type="entry name" value="S4"/>
    <property type="match status" value="1"/>
</dbReference>
<evidence type="ECO:0000255" key="1">
    <source>
        <dbReference type="HAMAP-Rule" id="MF_01306"/>
    </source>
</evidence>
<evidence type="ECO:0000256" key="2">
    <source>
        <dbReference type="SAM" id="MobiDB-lite"/>
    </source>
</evidence>
<evidence type="ECO:0000305" key="3"/>